<reference key="1">
    <citation type="journal article" date="1992" name="Cell">
        <title>UNC-5, a transmembrane protein with immunoglobulin and thrombospondin type 1 domains, guides cell and pioneer axon migrations in C. elegans.</title>
        <authorList>
            <person name="Leung-Hagesteijn C."/>
            <person name="Spence A.M."/>
            <person name="Stern B.D."/>
            <person name="Zhou Y."/>
            <person name="Su M.-W."/>
            <person name="Hedgecock E.M."/>
            <person name="Culotti J.G."/>
        </authorList>
    </citation>
    <scope>NUCLEOTIDE SEQUENCE [GENOMIC DNA]</scope>
    <scope>ALTERNATIVE SPLICING (ISOFORMS A AND C)</scope>
    <scope>FUNCTION</scope>
</reference>
<reference key="2">
    <citation type="journal article" date="1998" name="Science">
        <title>Genome sequence of the nematode C. elegans: a platform for investigating biology.</title>
        <authorList>
            <consortium name="The C. elegans sequencing consortium"/>
        </authorList>
    </citation>
    <scope>NUCLEOTIDE SEQUENCE [LARGE SCALE GENOMIC DNA]</scope>
    <source>
        <strain>Bristol N2</strain>
    </source>
</reference>
<reference key="3">
    <citation type="journal article" date="1993" name="Nature">
        <title>Expression of the UNC-5 guidance receptor in the touch neurons of C. elegans steers their axons dorsally.</title>
        <authorList>
            <person name="Hamelin M."/>
            <person name="Zhou Y."/>
            <person name="Su M.-W."/>
            <person name="Scott I.M."/>
            <person name="Culotti J.G."/>
        </authorList>
    </citation>
    <scope>FUNCTION</scope>
</reference>
<reference key="4">
    <citation type="journal article" date="1998" name="Dev. Biol.">
        <title>Suppressors of ectopic UNC-5 growth cone steering identify eight genes involved in axon guidance in Caenorhabditis elegans.</title>
        <authorList>
            <person name="Colavita A."/>
            <person name="Culotti J.G."/>
        </authorList>
    </citation>
    <scope>FUNCTION</scope>
</reference>
<reference key="5">
    <citation type="journal article" date="2000" name="Development">
        <title>Regulation of the UNC-5 netrin receptor initiates the first reorientation of migrating distal tip cells in Caenorhabditis elegans.</title>
        <authorList>
            <person name="Su M.-W."/>
            <person name="Merz D.C."/>
            <person name="Killeen M.T."/>
            <person name="Zhou Y."/>
            <person name="Zheng H."/>
            <person name="Kramer J.M."/>
            <person name="Hedgecock E.M."/>
            <person name="Culotti J.G."/>
        </authorList>
    </citation>
    <scope>FUNCTION</scope>
</reference>
<reference key="6">
    <citation type="journal article" date="2001" name="Genetics">
        <title>Multiple signaling mechanisms of the UNC-6/netrin receptors UNC-5 and UNC-40/DCC in vivo.</title>
        <authorList>
            <person name="Merz D.C."/>
            <person name="Zheng H."/>
            <person name="Killeen M.T."/>
            <person name="Krizus A."/>
            <person name="Culotti J.G."/>
        </authorList>
    </citation>
    <scope>FUNCTION</scope>
</reference>
<reference key="7">
    <citation type="journal article" date="2001" name="J. Biol. Chem.">
        <title>Netrin stimulates tyrosine phosphorylation of the UNC-5 family of netrin receptors and induces Shp2 binding to the RCM cytodomain.</title>
        <authorList>
            <person name="Tong J."/>
            <person name="Killeen M."/>
            <person name="Steven R."/>
            <person name="Binns K.L."/>
            <person name="Culotti J."/>
            <person name="Pawson T."/>
        </authorList>
    </citation>
    <scope>PHOSPHORYLATION</scope>
</reference>
<reference key="8">
    <citation type="journal article" date="2002" name="Dev. Biol.">
        <title>UNC-5 function requires phosphorylation of cytoplasmic tyrosine 482, but its UNC-40-independent functions also require a region between the ZU-5 and death domains.</title>
        <authorList>
            <person name="Killeen M."/>
            <person name="Tong J."/>
            <person name="Krizus A."/>
            <person name="Steven R."/>
            <person name="Scott I."/>
            <person name="Pawson T."/>
            <person name="Culotti J."/>
        </authorList>
    </citation>
    <scope>PHOSPHORYLATION AT TYR-510</scope>
    <scope>TISSUE SPECIFICITY</scope>
    <scope>MUTAGENESIS OF CYS-209; 415-TYR-TYR-416; TYR-445; TYR-467; TYR-510; TYR-566 AND TYR-719</scope>
</reference>
<reference key="9">
    <citation type="journal article" date="2005" name="Development">
        <title>SRC-1, a non-receptor type of protein tyrosine kinase, controls the direction of cell and growth cone migration in C. elegans.</title>
        <authorList>
            <person name="Itoh B."/>
            <person name="Hirose T."/>
            <person name="Takata N."/>
            <person name="Nishiwaki K."/>
            <person name="Koga M."/>
            <person name="Ohshima Y."/>
            <person name="Okada M."/>
        </authorList>
    </citation>
    <scope>TISSUE SPECIFICITY</scope>
</reference>
<reference key="10">
    <citation type="journal article" date="2005" name="Mol. Cell. Biol.">
        <title>SRC-1 mediates UNC-5 signaling in Caenorhabditis elegans.</title>
        <authorList>
            <person name="Lee J."/>
            <person name="Li W."/>
            <person name="Guan K.L."/>
        </authorList>
    </citation>
    <scope>INTERACTION WITH SRC-1</scope>
    <scope>PHOSPHORYLATION</scope>
</reference>
<reference key="11">
    <citation type="journal article" date="2007" name="Dev. Biol.">
        <title>C. elegans seu-1 encodes novel nuclear proteins that regulate responses to UNC-6/netrin guidance cues.</title>
        <authorList>
            <person name="Zheng H."/>
            <person name="Coudiere L."/>
            <person name="Camia C."/>
            <person name="Colavita A."/>
            <person name="Culotti J.G."/>
            <person name="Merz D.C."/>
        </authorList>
    </citation>
    <scope>FUNCTION</scope>
    <scope>MUTAGENESIS OF CYS-209 AND 311-TRP--PRO-947</scope>
</reference>
<reference key="12">
    <citation type="journal article" date="2007" name="Mol. Cell. Proteomics">
        <title>Proteomics reveals N-linked glycoprotein diversity in Caenorhabditis elegans and suggests an atypical translocation mechanism for integral membrane proteins.</title>
        <authorList>
            <person name="Kaji H."/>
            <person name="Kamiie J."/>
            <person name="Kawakami H."/>
            <person name="Kido K."/>
            <person name="Yamauchi Y."/>
            <person name="Shinkawa T."/>
            <person name="Taoka M."/>
            <person name="Takahashi N."/>
            <person name="Isobe T."/>
        </authorList>
    </citation>
    <scope>GLYCOSYLATION [LARGE SCALE ANALYSIS] AT ASN-206</scope>
    <scope>IDENTIFICATION BY MASS SPECTROMETRY</scope>
    <source>
        <strain>Bristol N2</strain>
    </source>
</reference>
<reference key="13">
    <citation type="journal article" date="2009" name="Nat. Neurosci.">
        <title>UNC-129 regulates the balance between UNC-40 dependent and independent UNC-5 signaling pathways.</title>
        <authorList>
            <person name="MacNeil L.T."/>
            <person name="Hardy W.R."/>
            <person name="Pawson T."/>
            <person name="Wrana J.L."/>
            <person name="Culotti J.G."/>
        </authorList>
    </citation>
    <scope>INTERACTION WITH UNC-129</scope>
    <scope>MUTAGENESIS OF 311-TRP--PRO-947</scope>
</reference>
<reference key="14">
    <citation type="journal article" date="2013" name="Mol. Cell">
        <title>C. elegans DPY-19 is a C-mannosyltransferase glycosylating thrombospondin repeats.</title>
        <authorList>
            <person name="Buettner F.F."/>
            <person name="Ashikov A."/>
            <person name="Tiemann B."/>
            <person name="Lehle L."/>
            <person name="Bakker H."/>
        </authorList>
    </citation>
    <scope>GLYCOSYLATION AT TRP-305 AND TRP-308</scope>
</reference>
<reference key="15">
    <citation type="journal article" date="2014" name="PLoS Genet.">
        <title>EVA-1 functions as an UNC-40 Co-receptor to enhance attraction to the MADD-4 guidance cue in Caenorhabditis elegans.</title>
        <authorList>
            <person name="Chan K.K."/>
            <person name="Seetharaman A."/>
            <person name="Bagg R."/>
            <person name="Selman G."/>
            <person name="Zhang Y."/>
            <person name="Kim J."/>
            <person name="Roy P.J."/>
        </authorList>
    </citation>
    <scope>INTERACTION WITH MADD-4</scope>
</reference>
<reference key="16">
    <citation type="journal article" date="2015" name="PLoS Genet.">
        <title>The Wnt frizzled receptor MOM-5 regulates the UNC-5 Netrin receptor through small GTPase-dependent signaling to determine the polarity of migrating cells.</title>
        <authorList>
            <person name="Levy-Strumpf N."/>
            <person name="Krizus M."/>
            <person name="Zheng H."/>
            <person name="Brown L."/>
            <person name="Culotti J.G."/>
        </authorList>
    </citation>
    <scope>FUNCTION</scope>
    <scope>DISRUPTION PHENOTYPE</scope>
</reference>
<comment type="function">
    <text evidence="8 9 12 15 20 21 22">Receptor for netrin (unc-6) required for axon guidance (PubMed:11454756, PubMed:8332188). Mediates axon repulsion of neuronal growth cones in the developing nervous system upon ligand binding (PubMed:11454756, PubMed:1384987, PubMed:8332188, PubMed:9473333). Axon migration is mediated by the secreted unc-6, which promotes attraction of neurons and axons through binding to the unc-40 receptor, while repulsion requires both unc-5 and unc-40 receptors (PubMed:11454756, PubMed:9473333). Involved in the ventral-dorsal and anterior-posterior migration of distal tip cells along the body, which may be mediated by Wnt receptor mom-5, ced-10/Rac, ced-12/ELMO and mig-2/RhoG (PubMed:10631179, PubMed:17716643, PubMed:26292279).</text>
</comment>
<comment type="subunit">
    <text evidence="13 17 19">Interacts (via cytoplasmic domain) with src-1 (via SH2 domain and SH3 domain) (PubMed:16024786). Interacts with madd-4 (PubMed:25122090). Interacts with unc-129; the interaction is direct (PubMed:19169249).</text>
</comment>
<comment type="subcellular location">
    <subcellularLocation>
        <location evidence="1">Cell membrane</location>
        <topology evidence="1">Single-pass type I membrane protein</topology>
    </subcellularLocation>
    <subcellularLocation>
        <location evidence="1">Membrane raft</location>
    </subcellularLocation>
    <subcellularLocation>
        <location evidence="1">Cell projection</location>
        <location evidence="1">Neuron projection</location>
    </subcellularLocation>
</comment>
<comment type="alternative products">
    <event type="alternative splicing"/>
    <isoform>
        <id>Q26261-2</id>
        <name evidence="26">c</name>
        <sequence type="displayed"/>
    </isoform>
    <isoform>
        <id>Q26261-1</id>
        <name evidence="24">a</name>
        <sequence type="described" ref="VSP_061199"/>
    </isoform>
    <isoform>
        <id>Q26261-3</id>
        <name evidence="25">b</name>
        <sequence type="described" ref="VSP_061199 VSP_061200 VSP_061201"/>
    </isoform>
    <isoform>
        <id>Q26261-4</id>
        <name evidence="27">d</name>
        <sequence type="described" ref="VSP_061198"/>
    </isoform>
    <isoform>
        <id>Q26261-5</id>
        <name evidence="28">e</name>
        <sequence type="described" ref="VSP_061197"/>
    </isoform>
    <isoform>
        <id>Q26261-6</id>
        <name evidence="29">f</name>
        <sequence type="described" ref="VSP_061196"/>
    </isoform>
</comment>
<comment type="tissue specificity">
    <text evidence="11 14">Expressed in cell bodies and axons of the VNC motor neurons that extend axons to the dorsal midline and within the ventral nerve cord (PubMed:12435363). Expressed in gonadal distal tip cells (DTC) (PubMed:16251208).</text>
</comment>
<comment type="PTM">
    <text evidence="10 11 13">Phosphorylated on different cytoplasmic tyrosine residues (PubMed:11533026, PubMed:12435363, PubMed:16024786). May be phosphorylated on tyrosine residues by src-1 (PubMed:16024786). Tyrosine phosphorylation is unc-6-dependent (PubMed:11533026).</text>
</comment>
<comment type="PTM">
    <text evidence="16 18">Glycosylated via C-mannosylation by dpy-19 at Trp-305 and Trp-308.</text>
</comment>
<comment type="disruption phenotype">
    <text evidence="20">Failed distal tip cell migration along the dorsal-ventral axis of the body. RNAi-mediated knockdown in mom-5, ced-10, ced-12 or mig-2 mutant backgrounds suppresses the migratory defect of distal tip cells in the respective single mutants.</text>
</comment>
<comment type="similarity">
    <text evidence="23">Belongs to the unc-5 family.</text>
</comment>
<comment type="caution">
    <text evidence="23">In contrast to other members of the family, it lacks a canonical signal sequence; the existence of the signal sequence is therefore unsure.</text>
</comment>
<keyword id="KW-0002">3D-structure</keyword>
<keyword id="KW-0025">Alternative splicing</keyword>
<keyword id="KW-1003">Cell membrane</keyword>
<keyword id="KW-0966">Cell projection</keyword>
<keyword id="KW-0217">Developmental protein</keyword>
<keyword id="KW-1015">Disulfide bond</keyword>
<keyword id="KW-0325">Glycoprotein</keyword>
<keyword id="KW-0393">Immunoglobulin domain</keyword>
<keyword id="KW-0472">Membrane</keyword>
<keyword id="KW-0597">Phosphoprotein</keyword>
<keyword id="KW-0675">Receptor</keyword>
<keyword id="KW-1185">Reference proteome</keyword>
<keyword id="KW-0677">Repeat</keyword>
<keyword id="KW-0732">Signal</keyword>
<keyword id="KW-0812">Transmembrane</keyword>
<keyword id="KW-1133">Transmembrane helix</keyword>
<gene>
    <name evidence="26" type="primary">unc-5</name>
    <name evidence="26" type="ORF">B0273.4</name>
</gene>
<dbReference type="EMBL" id="AH004080">
    <property type="protein sequence ID" value="AAB23866.2"/>
    <property type="molecule type" value="Genomic_DNA"/>
</dbReference>
<dbReference type="EMBL" id="S47135">
    <property type="protein sequence ID" value="AAB23866.2"/>
    <property type="status" value="JOINED"/>
    <property type="molecule type" value="Genomic_DNA"/>
</dbReference>
<dbReference type="EMBL" id="S47136">
    <property type="protein sequence ID" value="AAB23866.2"/>
    <property type="status" value="JOINED"/>
    <property type="molecule type" value="Genomic_DNA"/>
</dbReference>
<dbReference type="EMBL" id="S47137">
    <property type="protein sequence ID" value="AAB23866.2"/>
    <property type="status" value="JOINED"/>
    <property type="molecule type" value="Genomic_DNA"/>
</dbReference>
<dbReference type="EMBL" id="S47164">
    <property type="protein sequence ID" value="AAB23866.2"/>
    <property type="status" value="JOINED"/>
    <property type="molecule type" value="Genomic_DNA"/>
</dbReference>
<dbReference type="EMBL" id="S47165">
    <property type="protein sequence ID" value="AAB23866.2"/>
    <property type="status" value="JOINED"/>
    <property type="molecule type" value="Genomic_DNA"/>
</dbReference>
<dbReference type="EMBL" id="S47166">
    <property type="protein sequence ID" value="AAB23866.2"/>
    <property type="status" value="JOINED"/>
    <property type="molecule type" value="Genomic_DNA"/>
</dbReference>
<dbReference type="EMBL" id="S47167">
    <property type="protein sequence ID" value="AAB23866.2"/>
    <property type="status" value="JOINED"/>
    <property type="molecule type" value="Genomic_DNA"/>
</dbReference>
<dbReference type="EMBL" id="AH004080">
    <property type="protein sequence ID" value="AAB23867.2"/>
    <property type="molecule type" value="Genomic_DNA"/>
</dbReference>
<dbReference type="EMBL" id="S47134">
    <property type="protein sequence ID" value="AAB23867.2"/>
    <property type="status" value="JOINED"/>
    <property type="molecule type" value="Genomic_DNA"/>
</dbReference>
<dbReference type="EMBL" id="S47135">
    <property type="protein sequence ID" value="AAB23867.2"/>
    <property type="status" value="JOINED"/>
    <property type="molecule type" value="Genomic_DNA"/>
</dbReference>
<dbReference type="EMBL" id="S47136">
    <property type="protein sequence ID" value="AAB23867.2"/>
    <property type="status" value="JOINED"/>
    <property type="molecule type" value="Genomic_DNA"/>
</dbReference>
<dbReference type="EMBL" id="S47137">
    <property type="protein sequence ID" value="AAB23867.2"/>
    <property type="status" value="JOINED"/>
    <property type="molecule type" value="Genomic_DNA"/>
</dbReference>
<dbReference type="EMBL" id="S47164">
    <property type="protein sequence ID" value="AAB23867.2"/>
    <property type="status" value="JOINED"/>
    <property type="molecule type" value="Genomic_DNA"/>
</dbReference>
<dbReference type="EMBL" id="S47165">
    <property type="protein sequence ID" value="AAB23867.2"/>
    <property type="status" value="JOINED"/>
    <property type="molecule type" value="Genomic_DNA"/>
</dbReference>
<dbReference type="EMBL" id="S47166">
    <property type="protein sequence ID" value="AAB23867.2"/>
    <property type="status" value="JOINED"/>
    <property type="molecule type" value="Genomic_DNA"/>
</dbReference>
<dbReference type="EMBL" id="S47167">
    <property type="protein sequence ID" value="AAB23867.2"/>
    <property type="status" value="JOINED"/>
    <property type="molecule type" value="Genomic_DNA"/>
</dbReference>
<dbReference type="EMBL" id="BX284604">
    <property type="protein sequence ID" value="CCD61588.1"/>
    <property type="molecule type" value="Genomic_DNA"/>
</dbReference>
<dbReference type="EMBL" id="BX284604">
    <property type="protein sequence ID" value="CCD61589.1"/>
    <property type="molecule type" value="Genomic_DNA"/>
</dbReference>
<dbReference type="EMBL" id="BX284604">
    <property type="protein sequence ID" value="CDK13451.1"/>
    <property type="molecule type" value="Genomic_DNA"/>
</dbReference>
<dbReference type="EMBL" id="BX284604">
    <property type="protein sequence ID" value="CDK13452.1"/>
    <property type="molecule type" value="Genomic_DNA"/>
</dbReference>
<dbReference type="EMBL" id="BX284604">
    <property type="protein sequence ID" value="CDK13453.1"/>
    <property type="molecule type" value="Genomic_DNA"/>
</dbReference>
<dbReference type="EMBL" id="BX284604">
    <property type="protein sequence ID" value="CDK13454.1"/>
    <property type="molecule type" value="Genomic_DNA"/>
</dbReference>
<dbReference type="PIR" id="B44294">
    <property type="entry name" value="B44294"/>
</dbReference>
<dbReference type="PIR" id="T32541">
    <property type="entry name" value="T32541"/>
</dbReference>
<dbReference type="RefSeq" id="NP_001293749.1">
    <molecule id="Q26261-2"/>
    <property type="nucleotide sequence ID" value="NM_001306820.3"/>
</dbReference>
<dbReference type="RefSeq" id="NP_001293750.1">
    <property type="nucleotide sequence ID" value="NM_001306821.1"/>
</dbReference>
<dbReference type="RefSeq" id="NP_001293751.1">
    <molecule id="Q26261-5"/>
    <property type="nucleotide sequence ID" value="NM_001306822.3"/>
</dbReference>
<dbReference type="RefSeq" id="NP_001293752.1">
    <property type="nucleotide sequence ID" value="NM_001306823.1"/>
</dbReference>
<dbReference type="RefSeq" id="NP_001368390.1">
    <molecule id="Q26261-6"/>
    <property type="nucleotide sequence ID" value="NM_001380233.1"/>
</dbReference>
<dbReference type="RefSeq" id="NP_001380156.1">
    <molecule id="Q26261-4"/>
    <property type="nucleotide sequence ID" value="NM_001392311.1"/>
</dbReference>
<dbReference type="RefSeq" id="NP_500822.2">
    <molecule id="Q26261-3"/>
    <property type="nucleotide sequence ID" value="NM_068421.6"/>
</dbReference>
<dbReference type="RefSeq" id="NP_500823.1">
    <molecule id="Q26261-1"/>
    <property type="nucleotide sequence ID" value="NM_068422.6"/>
</dbReference>
<dbReference type="PDB" id="8EDC">
    <property type="method" value="X-ray"/>
    <property type="resolution" value="2.89 A"/>
    <property type="chains" value="A=29-228"/>
</dbReference>
<dbReference type="PDB" id="8EDI">
    <property type="method" value="X-ray"/>
    <property type="resolution" value="2.11 A"/>
    <property type="chains" value="A/B=29-228"/>
</dbReference>
<dbReference type="PDBsum" id="8EDC"/>
<dbReference type="PDBsum" id="8EDI"/>
<dbReference type="SASBDB" id="Q26261"/>
<dbReference type="SMR" id="Q26261"/>
<dbReference type="BioGRID" id="42456">
    <property type="interactions" value="7"/>
</dbReference>
<dbReference type="FunCoup" id="Q26261">
    <property type="interactions" value="850"/>
</dbReference>
<dbReference type="STRING" id="6239.B0273.4c.1"/>
<dbReference type="GlyCosmos" id="Q26261">
    <property type="glycosylation" value="3 sites, No reported glycans"/>
</dbReference>
<dbReference type="iPTMnet" id="Q26261"/>
<dbReference type="PaxDb" id="6239-B0273.4a"/>
<dbReference type="PeptideAtlas" id="Q26261"/>
<dbReference type="EnsemblMetazoa" id="B0273.4a.1">
    <molecule id="Q26261-1"/>
    <property type="protein sequence ID" value="B0273.4a.1"/>
    <property type="gene ID" value="WBGene00006745"/>
</dbReference>
<dbReference type="EnsemblMetazoa" id="B0273.4b.1">
    <molecule id="Q26261-3"/>
    <property type="protein sequence ID" value="B0273.4b.1"/>
    <property type="gene ID" value="WBGene00006745"/>
</dbReference>
<dbReference type="EnsemblMetazoa" id="B0273.4c.1">
    <molecule id="Q26261-2"/>
    <property type="protein sequence ID" value="B0273.4c.1"/>
    <property type="gene ID" value="WBGene00006745"/>
</dbReference>
<dbReference type="EnsemblMetazoa" id="B0273.4d.1">
    <molecule id="Q26261-4"/>
    <property type="protein sequence ID" value="B0273.4d.1"/>
    <property type="gene ID" value="WBGene00006745"/>
</dbReference>
<dbReference type="EnsemblMetazoa" id="B0273.4d.2">
    <molecule id="Q26261-4"/>
    <property type="protein sequence ID" value="B0273.4d.2"/>
    <property type="gene ID" value="WBGene00006745"/>
</dbReference>
<dbReference type="EnsemblMetazoa" id="B0273.4e.1">
    <molecule id="Q26261-5"/>
    <property type="protein sequence ID" value="B0273.4e.1"/>
    <property type="gene ID" value="WBGene00006745"/>
</dbReference>
<dbReference type="EnsemblMetazoa" id="B0273.4f.1">
    <molecule id="Q26261-6"/>
    <property type="protein sequence ID" value="B0273.4f.1"/>
    <property type="gene ID" value="WBGene00006745"/>
</dbReference>
<dbReference type="GeneID" id="177334"/>
<dbReference type="KEGG" id="cel:CELE_B0273.4"/>
<dbReference type="UCSC" id="B0273.4a">
    <molecule id="Q26261-1"/>
    <property type="organism name" value="c. elegans"/>
</dbReference>
<dbReference type="AGR" id="WB:WBGene00006745"/>
<dbReference type="CTD" id="36703"/>
<dbReference type="WormBase" id="B0273.4a">
    <molecule id="Q26261-1"/>
    <property type="protein sequence ID" value="CE16790"/>
    <property type="gene ID" value="WBGene00006745"/>
    <property type="gene designation" value="unc-5"/>
</dbReference>
<dbReference type="WormBase" id="B0273.4b">
    <molecule id="Q26261-3"/>
    <property type="protein sequence ID" value="CE37693"/>
    <property type="gene ID" value="WBGene00006745"/>
    <property type="gene designation" value="unc-5"/>
</dbReference>
<dbReference type="WormBase" id="B0273.4c">
    <molecule id="Q26261-2"/>
    <property type="protein sequence ID" value="CE16791"/>
    <property type="gene ID" value="WBGene00006745"/>
    <property type="gene designation" value="unc-5"/>
</dbReference>
<dbReference type="WormBase" id="B0273.4d">
    <molecule id="Q26261-4"/>
    <property type="protein sequence ID" value="CE49241"/>
    <property type="gene ID" value="WBGene00006745"/>
    <property type="gene designation" value="unc-5"/>
</dbReference>
<dbReference type="WormBase" id="B0273.4e">
    <molecule id="Q26261-5"/>
    <property type="protein sequence ID" value="CE49455"/>
    <property type="gene ID" value="WBGene00006745"/>
    <property type="gene designation" value="unc-5"/>
</dbReference>
<dbReference type="WormBase" id="B0273.4f">
    <molecule id="Q26261-6"/>
    <property type="protein sequence ID" value="CE49300"/>
    <property type="gene ID" value="WBGene00006745"/>
    <property type="gene designation" value="unc-5"/>
</dbReference>
<dbReference type="eggNOG" id="KOG1480">
    <property type="taxonomic scope" value="Eukaryota"/>
</dbReference>
<dbReference type="GeneTree" id="ENSGT00950000182815"/>
<dbReference type="HOGENOM" id="CLU_014383_0_0_1"/>
<dbReference type="InParanoid" id="Q26261"/>
<dbReference type="OMA" id="CECQAWS"/>
<dbReference type="OrthoDB" id="5973910at2759"/>
<dbReference type="PhylomeDB" id="Q26261"/>
<dbReference type="Reactome" id="R-CEL-373752">
    <property type="pathway name" value="Netrin-1 signaling"/>
</dbReference>
<dbReference type="Reactome" id="R-CEL-418886">
    <property type="pathway name" value="Netrin mediated repulsion signals"/>
</dbReference>
<dbReference type="PRO" id="PR:Q26261"/>
<dbReference type="Proteomes" id="UP000001940">
    <property type="component" value="Chromosome IV"/>
</dbReference>
<dbReference type="Bgee" id="WBGene00006745">
    <property type="expression patterns" value="Expressed in pharyngeal muscle cell (C elegans) and 3 other cell types or tissues"/>
</dbReference>
<dbReference type="ExpressionAtlas" id="Q26261">
    <property type="expression patterns" value="baseline and differential"/>
</dbReference>
<dbReference type="GO" id="GO:0044295">
    <property type="term" value="C:axonal growth cone"/>
    <property type="evidence" value="ECO:0000314"/>
    <property type="project" value="UniProtKB"/>
</dbReference>
<dbReference type="GO" id="GO:0045121">
    <property type="term" value="C:membrane raft"/>
    <property type="evidence" value="ECO:0007669"/>
    <property type="project" value="UniProtKB-SubCell"/>
</dbReference>
<dbReference type="GO" id="GO:0005886">
    <property type="term" value="C:plasma membrane"/>
    <property type="evidence" value="ECO:0000305"/>
    <property type="project" value="WormBase"/>
</dbReference>
<dbReference type="GO" id="GO:0005042">
    <property type="term" value="F:netrin receptor activity"/>
    <property type="evidence" value="ECO:0000315"/>
    <property type="project" value="UniProtKB"/>
</dbReference>
<dbReference type="GO" id="GO:1990782">
    <property type="term" value="F:protein tyrosine kinase binding"/>
    <property type="evidence" value="ECO:0000353"/>
    <property type="project" value="UniProtKB"/>
</dbReference>
<dbReference type="GO" id="GO:0061643">
    <property type="term" value="P:chemorepulsion of axon"/>
    <property type="evidence" value="ECO:0000315"/>
    <property type="project" value="UniProtKB"/>
</dbReference>
<dbReference type="GO" id="GO:0071679">
    <property type="term" value="P:commissural neuron axon guidance"/>
    <property type="evidence" value="ECO:0000315"/>
    <property type="project" value="UniProtKB"/>
</dbReference>
<dbReference type="GO" id="GO:0097628">
    <property type="term" value="P:distal tip cell migration"/>
    <property type="evidence" value="ECO:0000315"/>
    <property type="project" value="UniProtKB"/>
</dbReference>
<dbReference type="GO" id="GO:0033563">
    <property type="term" value="P:dorsal/ventral axon guidance"/>
    <property type="evidence" value="ECO:0000315"/>
    <property type="project" value="UniProtKB"/>
</dbReference>
<dbReference type="GO" id="GO:0030950">
    <property type="term" value="P:establishment or maintenance of actin cytoskeleton polarity"/>
    <property type="evidence" value="ECO:0000315"/>
    <property type="project" value="UniProtKB"/>
</dbReference>
<dbReference type="GO" id="GO:0035262">
    <property type="term" value="P:gonad morphogenesis"/>
    <property type="evidence" value="ECO:0000315"/>
    <property type="project" value="UniProtKB"/>
</dbReference>
<dbReference type="GO" id="GO:0008078">
    <property type="term" value="P:mesodermal cell migration"/>
    <property type="evidence" value="ECO:0000315"/>
    <property type="project" value="WormBase"/>
</dbReference>
<dbReference type="GO" id="GO:0008045">
    <property type="term" value="P:motor neuron axon guidance"/>
    <property type="evidence" value="ECO:0000315"/>
    <property type="project" value="UniProtKB"/>
</dbReference>
<dbReference type="GO" id="GO:0031115">
    <property type="term" value="P:negative regulation of microtubule polymerization"/>
    <property type="evidence" value="ECO:0000315"/>
    <property type="project" value="UniProtKB"/>
</dbReference>
<dbReference type="GO" id="GO:0045138">
    <property type="term" value="P:nematode male tail tip morphogenesis"/>
    <property type="evidence" value="ECO:0000316"/>
    <property type="project" value="WormBase"/>
</dbReference>
<dbReference type="GO" id="GO:0038007">
    <property type="term" value="P:netrin-activated signaling pathway"/>
    <property type="evidence" value="ECO:0000315"/>
    <property type="project" value="UniProtKB"/>
</dbReference>
<dbReference type="GO" id="GO:1905488">
    <property type="term" value="P:positive regulation of anterior/posterior axon guidance"/>
    <property type="evidence" value="ECO:0000315"/>
    <property type="project" value="UniProtKB"/>
</dbReference>
<dbReference type="GO" id="GO:0045773">
    <property type="term" value="P:positive regulation of axon extension"/>
    <property type="evidence" value="ECO:0000315"/>
    <property type="project" value="WormBase"/>
</dbReference>
<dbReference type="GO" id="GO:0040017">
    <property type="term" value="P:positive regulation of locomotion"/>
    <property type="evidence" value="ECO:0000315"/>
    <property type="project" value="UniProtKB"/>
</dbReference>
<dbReference type="GO" id="GO:1905815">
    <property type="term" value="P:regulation of dorsal/ventral axon guidance"/>
    <property type="evidence" value="ECO:0000315"/>
    <property type="project" value="UniProtKB"/>
</dbReference>
<dbReference type="GO" id="GO:0007419">
    <property type="term" value="P:ventral cord development"/>
    <property type="evidence" value="ECO:0000315"/>
    <property type="project" value="UniProtKB"/>
</dbReference>
<dbReference type="CDD" id="cd08781">
    <property type="entry name" value="Death_UNC5-like"/>
    <property type="match status" value="1"/>
</dbReference>
<dbReference type="FunFam" id="2.60.220.30:FF:000021">
    <property type="entry name" value="Netrin receptor unc-5"/>
    <property type="match status" value="1"/>
</dbReference>
<dbReference type="FunFam" id="2.20.100.10:FF:000002">
    <property type="entry name" value="Unc-5 netrin receptor C"/>
    <property type="match status" value="1"/>
</dbReference>
<dbReference type="Gene3D" id="2.60.220.30">
    <property type="match status" value="1"/>
</dbReference>
<dbReference type="Gene3D" id="1.10.533.10">
    <property type="entry name" value="Death Domain, Fas"/>
    <property type="match status" value="1"/>
</dbReference>
<dbReference type="Gene3D" id="2.60.40.10">
    <property type="entry name" value="Immunoglobulins"/>
    <property type="match status" value="2"/>
</dbReference>
<dbReference type="Gene3D" id="2.20.100.10">
    <property type="entry name" value="Thrombospondin type-1 (TSP1) repeat"/>
    <property type="match status" value="2"/>
</dbReference>
<dbReference type="InterPro" id="IPR011029">
    <property type="entry name" value="DEATH-like_dom_sf"/>
</dbReference>
<dbReference type="InterPro" id="IPR000488">
    <property type="entry name" value="Death_dom"/>
</dbReference>
<dbReference type="InterPro" id="IPR007110">
    <property type="entry name" value="Ig-like_dom"/>
</dbReference>
<dbReference type="InterPro" id="IPR036179">
    <property type="entry name" value="Ig-like_dom_sf"/>
</dbReference>
<dbReference type="InterPro" id="IPR013783">
    <property type="entry name" value="Ig-like_fold"/>
</dbReference>
<dbReference type="InterPro" id="IPR003599">
    <property type="entry name" value="Ig_sub"/>
</dbReference>
<dbReference type="InterPro" id="IPR003598">
    <property type="entry name" value="Ig_sub2"/>
</dbReference>
<dbReference type="InterPro" id="IPR000884">
    <property type="entry name" value="TSP1_rpt"/>
</dbReference>
<dbReference type="InterPro" id="IPR036383">
    <property type="entry name" value="TSP1_rpt_sf"/>
</dbReference>
<dbReference type="InterPro" id="IPR037936">
    <property type="entry name" value="UNC5"/>
</dbReference>
<dbReference type="InterPro" id="IPR033772">
    <property type="entry name" value="UPA"/>
</dbReference>
<dbReference type="InterPro" id="IPR000906">
    <property type="entry name" value="ZU5_dom"/>
</dbReference>
<dbReference type="PANTHER" id="PTHR12582:SF47">
    <property type="entry name" value="NETRIN RECEPTOR UNC-5"/>
    <property type="match status" value="1"/>
</dbReference>
<dbReference type="PANTHER" id="PTHR12582">
    <property type="entry name" value="NETRIN RECEPTOR UNC5"/>
    <property type="match status" value="1"/>
</dbReference>
<dbReference type="Pfam" id="PF00531">
    <property type="entry name" value="Death"/>
    <property type="match status" value="1"/>
</dbReference>
<dbReference type="Pfam" id="PF13895">
    <property type="entry name" value="Ig_2"/>
    <property type="match status" value="1"/>
</dbReference>
<dbReference type="Pfam" id="PF00090">
    <property type="entry name" value="TSP_1"/>
    <property type="match status" value="2"/>
</dbReference>
<dbReference type="Pfam" id="PF17217">
    <property type="entry name" value="UPA"/>
    <property type="match status" value="1"/>
</dbReference>
<dbReference type="Pfam" id="PF00791">
    <property type="entry name" value="ZU5"/>
    <property type="match status" value="1"/>
</dbReference>
<dbReference type="SMART" id="SM00005">
    <property type="entry name" value="DEATH"/>
    <property type="match status" value="1"/>
</dbReference>
<dbReference type="SMART" id="SM00409">
    <property type="entry name" value="IG"/>
    <property type="match status" value="1"/>
</dbReference>
<dbReference type="SMART" id="SM00408">
    <property type="entry name" value="IGc2"/>
    <property type="match status" value="1"/>
</dbReference>
<dbReference type="SMART" id="SM00209">
    <property type="entry name" value="TSP1"/>
    <property type="match status" value="2"/>
</dbReference>
<dbReference type="SMART" id="SM00218">
    <property type="entry name" value="ZU5"/>
    <property type="match status" value="1"/>
</dbReference>
<dbReference type="SUPFAM" id="SSF47986">
    <property type="entry name" value="DEATH domain"/>
    <property type="match status" value="1"/>
</dbReference>
<dbReference type="SUPFAM" id="SSF48726">
    <property type="entry name" value="Immunoglobulin"/>
    <property type="match status" value="1"/>
</dbReference>
<dbReference type="SUPFAM" id="SSF82895">
    <property type="entry name" value="TSP-1 type 1 repeat"/>
    <property type="match status" value="1"/>
</dbReference>
<dbReference type="PROSITE" id="PS50017">
    <property type="entry name" value="DEATH_DOMAIN"/>
    <property type="match status" value="1"/>
</dbReference>
<dbReference type="PROSITE" id="PS50835">
    <property type="entry name" value="IG_LIKE"/>
    <property type="match status" value="1"/>
</dbReference>
<dbReference type="PROSITE" id="PS50092">
    <property type="entry name" value="TSP1"/>
    <property type="match status" value="2"/>
</dbReference>
<dbReference type="PROSITE" id="PS51145">
    <property type="entry name" value="ZU5"/>
    <property type="match status" value="1"/>
</dbReference>
<name>UNC5_CAEEL</name>
<organism>
    <name type="scientific">Caenorhabditis elegans</name>
    <dbReference type="NCBI Taxonomy" id="6239"/>
    <lineage>
        <taxon>Eukaryota</taxon>
        <taxon>Metazoa</taxon>
        <taxon>Ecdysozoa</taxon>
        <taxon>Nematoda</taxon>
        <taxon>Chromadorea</taxon>
        <taxon>Rhabditida</taxon>
        <taxon>Rhabditina</taxon>
        <taxon>Rhabditomorpha</taxon>
        <taxon>Rhabditoidea</taxon>
        <taxon>Rhabditidae</taxon>
        <taxon>Peloderinae</taxon>
        <taxon>Caenorhabditis</taxon>
    </lineage>
</organism>
<evidence type="ECO:0000250" key="1">
    <source>
        <dbReference type="UniProtKB" id="O08721"/>
    </source>
</evidence>
<evidence type="ECO:0000250" key="2">
    <source>
        <dbReference type="UniProtKB" id="Q6ZN44"/>
    </source>
</evidence>
<evidence type="ECO:0000255" key="3"/>
<evidence type="ECO:0000255" key="4">
    <source>
        <dbReference type="PROSITE-ProRule" id="PRU00064"/>
    </source>
</evidence>
<evidence type="ECO:0000255" key="5">
    <source>
        <dbReference type="PROSITE-ProRule" id="PRU00114"/>
    </source>
</evidence>
<evidence type="ECO:0000255" key="6">
    <source>
        <dbReference type="PROSITE-ProRule" id="PRU00210"/>
    </source>
</evidence>
<evidence type="ECO:0000255" key="7">
    <source>
        <dbReference type="PROSITE-ProRule" id="PRU00485"/>
    </source>
</evidence>
<evidence type="ECO:0000269" key="8">
    <source>
    </source>
</evidence>
<evidence type="ECO:0000269" key="9">
    <source>
    </source>
</evidence>
<evidence type="ECO:0000269" key="10">
    <source>
    </source>
</evidence>
<evidence type="ECO:0000269" key="11">
    <source>
    </source>
</evidence>
<evidence type="ECO:0000269" key="12">
    <source>
    </source>
</evidence>
<evidence type="ECO:0000269" key="13">
    <source>
    </source>
</evidence>
<evidence type="ECO:0000269" key="14">
    <source>
    </source>
</evidence>
<evidence type="ECO:0000269" key="15">
    <source>
    </source>
</evidence>
<evidence type="ECO:0000269" key="16">
    <source>
    </source>
</evidence>
<evidence type="ECO:0000269" key="17">
    <source>
    </source>
</evidence>
<evidence type="ECO:0000269" key="18">
    <source>
    </source>
</evidence>
<evidence type="ECO:0000269" key="19">
    <source>
    </source>
</evidence>
<evidence type="ECO:0000269" key="20">
    <source>
    </source>
</evidence>
<evidence type="ECO:0000269" key="21">
    <source>
    </source>
</evidence>
<evidence type="ECO:0000269" key="22">
    <source>
    </source>
</evidence>
<evidence type="ECO:0000305" key="23"/>
<evidence type="ECO:0000312" key="24">
    <source>
        <dbReference type="WormBase" id="B0273.4a"/>
    </source>
</evidence>
<evidence type="ECO:0000312" key="25">
    <source>
        <dbReference type="WormBase" id="B0273.4b"/>
    </source>
</evidence>
<evidence type="ECO:0000312" key="26">
    <source>
        <dbReference type="WormBase" id="B0273.4c"/>
    </source>
</evidence>
<evidence type="ECO:0000312" key="27">
    <source>
        <dbReference type="WormBase" id="B0273.4d"/>
    </source>
</evidence>
<evidence type="ECO:0000312" key="28">
    <source>
        <dbReference type="WormBase" id="B0273.4e"/>
    </source>
</evidence>
<evidence type="ECO:0000312" key="29">
    <source>
        <dbReference type="WormBase" id="B0273.4f"/>
    </source>
</evidence>
<evidence type="ECO:0007829" key="30">
    <source>
        <dbReference type="PDB" id="8EDI"/>
    </source>
</evidence>
<accession>Q26261</accession>
<accession>O44171</accession>
<accession>Q26262</accession>
<accession>Q7JPT6</accession>
<accession>Q7KPX0</accession>
<accession>V6CK86</accession>
<accession>V6CLG6</accession>
<accession>V6CLK6</accession>
<accession>V6CLL7</accession>
<feature type="signal peptide" evidence="3">
    <location>
        <begin position="1"/>
        <end status="unknown"/>
    </location>
</feature>
<feature type="chain" id="PRO_0000036081" description="Netrin receptor unc-5">
    <location>
        <begin status="unknown"/>
        <end position="947"/>
    </location>
</feature>
<feature type="topological domain" description="Extracellular" evidence="3">
    <location>
        <begin status="unknown"/>
        <end position="368"/>
    </location>
</feature>
<feature type="transmembrane region" description="Helical" evidence="3">
    <location>
        <begin position="369"/>
        <end position="389"/>
    </location>
</feature>
<feature type="topological domain" description="Cytoplasmic" evidence="3">
    <location>
        <begin position="390"/>
        <end position="947"/>
    </location>
</feature>
<feature type="domain" description="Ig-like">
    <location>
        <begin position="43"/>
        <end position="141"/>
    </location>
</feature>
<feature type="domain" description="Ig-like C2-type">
    <location>
        <begin position="139"/>
        <end position="226"/>
    </location>
</feature>
<feature type="domain" description="TSP type-1 1" evidence="6">
    <location>
        <begin position="230"/>
        <end position="300"/>
    </location>
</feature>
<feature type="domain" description="TSP type-1 2" evidence="6">
    <location>
        <begin position="302"/>
        <end position="354"/>
    </location>
</feature>
<feature type="domain" description="ZU5" evidence="7">
    <location>
        <begin position="530"/>
        <end position="658"/>
    </location>
</feature>
<feature type="domain" description="Death" evidence="4">
    <location>
        <begin position="857"/>
        <end position="938"/>
    </location>
</feature>
<feature type="modified residue" description="Phosphotyrosine" evidence="11">
    <location>
        <position position="510"/>
    </location>
</feature>
<feature type="glycosylation site" description="N-linked (GlcNAc...) asparagine" evidence="16">
    <location>
        <position position="206"/>
    </location>
</feature>
<feature type="glycosylation site" description="C-linked (Man) tryptophan" evidence="18">
    <location>
        <position position="305"/>
    </location>
</feature>
<feature type="glycosylation site" description="C-linked (Man) tryptophan" evidence="18">
    <location>
        <position position="308"/>
    </location>
</feature>
<feature type="disulfide bond" evidence="2">
    <location>
        <begin position="53"/>
        <end position="112"/>
    </location>
</feature>
<feature type="disulfide bond" evidence="5">
    <location>
        <begin position="160"/>
        <end position="209"/>
    </location>
</feature>
<feature type="disulfide bond" evidence="6">
    <location>
        <begin position="243"/>
        <end position="295"/>
    </location>
</feature>
<feature type="disulfide bond" evidence="6">
    <location>
        <begin position="247"/>
        <end position="299"/>
    </location>
</feature>
<feature type="disulfide bond" evidence="6">
    <location>
        <begin position="273"/>
        <end position="285"/>
    </location>
</feature>
<feature type="splice variant" id="VSP_061196" description="In isoform f." evidence="23">
    <location>
        <begin position="1"/>
        <end position="290"/>
    </location>
</feature>
<feature type="splice variant" id="VSP_061197" description="In isoform e." evidence="23">
    <location>
        <begin position="1"/>
        <end position="195"/>
    </location>
</feature>
<feature type="splice variant" id="VSP_061198" description="In isoform d." evidence="23">
    <location>
        <begin position="1"/>
        <end position="136"/>
    </location>
</feature>
<feature type="splice variant" id="VSP_061199" description="In isoform a and isoform b." evidence="23">
    <location>
        <begin position="1"/>
        <end position="28"/>
    </location>
</feature>
<feature type="splice variant" id="VSP_061200" description="In isoform b." evidence="23">
    <original>PIESALSPVIVIGQC</original>
    <variation>RECKKILKIYISKIS</variation>
    <location>
        <begin position="581"/>
        <end position="595"/>
    </location>
</feature>
<feature type="splice variant" id="VSP_061201" description="In isoform b." evidence="23">
    <location>
        <begin position="596"/>
        <end position="947"/>
    </location>
</feature>
<feature type="mutagenesis site" description="In ev585; temperature-sensitive allele leading to distal tip cells migration defects. The distal tip cell migration defects are enhanced in seu-1 ev520 or seu-1 ev529 mutants." evidence="11 15">
    <original>C</original>
    <variation>Y</variation>
    <location>
        <position position="209"/>
    </location>
</feature>
<feature type="mutagenesis site" description="In e53; Disregulates axon guidance and migration. Distal tip cell migration defects. On an unc-129 mutant background, does not contribute to an increase in axonal guidance defects. The distal tip cell migration defects are enhanced in seu-1 ev520 or seu-1 ev529 mutants." evidence="15 17">
    <location>
        <begin position="311"/>
        <end position="947"/>
    </location>
</feature>
<feature type="mutagenesis site" description="Induces a strong decrease in tyrosine phosphorylation but only weakly affects function in vivo; when associated with F-445; F-467; F-566 and F-719." evidence="11">
    <original>YY</original>
    <variation>FF</variation>
    <location>
        <begin position="415"/>
        <end position="416"/>
    </location>
</feature>
<feature type="mutagenesis site" description="Induces a strong decrease in tyrosine phosphorylation but only weakly affects function in vivo; when associated with F-415; F-416; F-467; F-566 and F-719." evidence="11">
    <original>Y</original>
    <variation>F</variation>
    <location>
        <position position="445"/>
    </location>
</feature>
<feature type="mutagenesis site" description="Induces a strong decrease in tyrosine phosphorylation but only weakly affects function in vivo; when associated with F-415; F-416; F-445; F-566 and F-719." evidence="11">
    <original>Y</original>
    <variation>F</variation>
    <location>
        <position position="467"/>
    </location>
</feature>
<feature type="mutagenesis site" description="Loss of function and induces a strong decrease in tyrosine phosphorylation." evidence="11">
    <original>Y</original>
    <variation>F</variation>
    <location>
        <position position="510"/>
    </location>
</feature>
<feature type="mutagenesis site" description="Induces a strong decrease in tyrosine phosphorylation but only weakly affects function in vivo; when associated with F-415; F-416; F-445; F-467 and F-719." evidence="11">
    <original>Y</original>
    <variation>F</variation>
    <location>
        <position position="566"/>
    </location>
</feature>
<feature type="mutagenesis site" description="Induces a strong decrease in tyrosine phosphorylation but only weakly affects function in vivo; when associated with F-415; F-416; F-445; F-467 and F-566." evidence="11">
    <original>Y</original>
    <variation>F</variation>
    <location>
        <position position="719"/>
    </location>
</feature>
<feature type="sequence conflict" description="In Ref. 1; AAB23866/AAB23867." evidence="23" ref="1">
    <original>V</original>
    <variation>L</variation>
    <location>
        <position position="642"/>
    </location>
</feature>
<feature type="strand" evidence="30">
    <location>
        <begin position="33"/>
        <end position="36"/>
    </location>
</feature>
<feature type="strand" evidence="30">
    <location>
        <begin position="41"/>
        <end position="44"/>
    </location>
</feature>
<feature type="strand" evidence="30">
    <location>
        <begin position="49"/>
        <end position="56"/>
    </location>
</feature>
<feature type="strand" evidence="30">
    <location>
        <begin position="59"/>
        <end position="65"/>
    </location>
</feature>
<feature type="helix" evidence="30">
    <location>
        <begin position="72"/>
        <end position="74"/>
    </location>
</feature>
<feature type="strand" evidence="30">
    <location>
        <begin position="76"/>
        <end position="81"/>
    </location>
</feature>
<feature type="turn" evidence="30">
    <location>
        <begin position="83"/>
        <end position="85"/>
    </location>
</feature>
<feature type="strand" evidence="30">
    <location>
        <begin position="88"/>
        <end position="96"/>
    </location>
</feature>
<feature type="helix" evidence="30">
    <location>
        <begin position="98"/>
        <end position="102"/>
    </location>
</feature>
<feature type="strand" evidence="30">
    <location>
        <begin position="111"/>
        <end position="117"/>
    </location>
</feature>
<feature type="strand" evidence="30">
    <location>
        <begin position="130"/>
        <end position="137"/>
    </location>
</feature>
<feature type="strand" evidence="30">
    <location>
        <begin position="148"/>
        <end position="151"/>
    </location>
</feature>
<feature type="strand" evidence="30">
    <location>
        <begin position="156"/>
        <end position="158"/>
    </location>
</feature>
<feature type="strand" evidence="30">
    <location>
        <begin position="164"/>
        <end position="167"/>
    </location>
</feature>
<feature type="strand" evidence="30">
    <location>
        <begin position="170"/>
        <end position="175"/>
    </location>
</feature>
<feature type="strand" evidence="30">
    <location>
        <begin position="184"/>
        <end position="188"/>
    </location>
</feature>
<feature type="strand" evidence="30">
    <location>
        <begin position="194"/>
        <end position="198"/>
    </location>
</feature>
<feature type="helix" evidence="30">
    <location>
        <begin position="201"/>
        <end position="203"/>
    </location>
</feature>
<feature type="strand" evidence="30">
    <location>
        <begin position="205"/>
        <end position="213"/>
    </location>
</feature>
<feature type="strand" evidence="30">
    <location>
        <begin position="216"/>
        <end position="219"/>
    </location>
</feature>
<feature type="strand" evidence="30">
    <location>
        <begin position="223"/>
        <end position="228"/>
    </location>
</feature>
<sequence length="947" mass="104729">MEDDTPDVSSDSNGDAAYSDYFLDYKSIMDEITITTQPKSGYVIRNKPLRLQCRANHATKIRYKCSSKWIDDSRIEKLIGTDSTSGVGYIDASVDISRIDVDTSGHVDAFQCQCYASGDDDQDVVASDVATVHLAYMRKHFLKSPVAQRVQEGTTLQLPCQAPESDPKAELTWYKDGVVVQPDANVIRASDGSLIMSAARLSDSGNYTCEATNVANSRKTDPVEVQIYVDGGWSEWSPWIGTCHVDCPLLRQHAHRIRDPHDVLPHQRRTRTCNNPAPLNDGEYCKGEEEMTRSCKVPCKLDGGWSSWSDWSACSSSCHRYRTRACTVPPPMNGGQPCFGDDLMTQECPAQLCTADSSRIVISDTAVYGSVASIFIVASFILAILAMFCCKRGNSKKSKPLKPQKMNSEKAGGIYYSEPPGVRRLLLEHQHGTLLGEKISSCSQYFEPPPLPHSTTLRSGKSAFSGYSSTRNAGSRAALIQECSSSSSGSGGKRTMLRTSSSNCSDDDNYATLYDYMEDKSVLGLDTSQNIVAAQIDSNGARLSLSKSGARLIVPELAVEGEKMLYLAVSDTLTDQPHLKPIESALSPVIVIGQCDVSMSAHDNILRRPVVVSFRHCASTFPRDNWQFTLYADEGSGWQKAVTIGEENLNTNMFVQFEQPGKKNDGFGWCHVMTYSLARLMLAGHPRRNSLSAAKRVHLAVFGPTEMSAYRRPFELRVYCVPETGAAMESVWKQEDGSRLLCESNDFILNEKGNLCICIEDVIPGFSCDGPEVVEISETQHRFVAQNGLHCSLKFRPKEINGSQFSTRVIVYQKASSTEPMVMEVSNEPELYDATSEEREKGSVCVEFRLPFGVKDELARLLDMPNESHSDWRGLAKKLHYDRYLQFFASFPDCSPTSLLLDLWEASSSGSARAVPDLLQTLRVMGRPDAVMVLERFLSAFPQIVSP</sequence>
<protein>
    <recommendedName>
        <fullName>Netrin receptor unc-5</fullName>
    </recommendedName>
    <alternativeName>
        <fullName>Uncoordinated protein 5</fullName>
    </alternativeName>
</protein>
<proteinExistence type="evidence at protein level"/>